<proteinExistence type="evidence at protein level"/>
<keyword id="KW-0963">Cytoplasm</keyword>
<keyword id="KW-0378">Hydrolase</keyword>
<keyword id="KW-0479">Metal-binding</keyword>
<keyword id="KW-0507">mRNA processing</keyword>
<keyword id="KW-0539">Nucleus</keyword>
<keyword id="KW-0597">Phosphoprotein</keyword>
<keyword id="KW-1185">Reference proteome</keyword>
<keyword id="KW-0832">Ubl conjugation</keyword>
<keyword id="KW-0862">Zinc</keyword>
<organism>
    <name type="scientific">Mus musculus</name>
    <name type="common">Mouse</name>
    <dbReference type="NCBI Taxonomy" id="10090"/>
    <lineage>
        <taxon>Eukaryota</taxon>
        <taxon>Metazoa</taxon>
        <taxon>Chordata</taxon>
        <taxon>Craniata</taxon>
        <taxon>Vertebrata</taxon>
        <taxon>Euteleostomi</taxon>
        <taxon>Mammalia</taxon>
        <taxon>Eutheria</taxon>
        <taxon>Euarchontoglires</taxon>
        <taxon>Glires</taxon>
        <taxon>Rodentia</taxon>
        <taxon>Myomorpha</taxon>
        <taxon>Muroidea</taxon>
        <taxon>Muridae</taxon>
        <taxon>Murinae</taxon>
        <taxon>Mus</taxon>
        <taxon>Mus</taxon>
    </lineage>
</organism>
<sequence length="198" mass="24031">MDSLLMKQKKFLYHFKNVRWAKGRHETYLCYVVKRRDSATSCSLDFGHLRNKSGCHVELLFLRYISDWDLDPGRCYRVTWFTSWSPCYDCARHVAEFLRWNPNLSLRIFTARLYFCEDRKAEPEGLRRLHRAGVQIGIMTFKDYFYCWNTFVENRERTFKAWEGLHENSVRLTRQLRRILLPLYEVDDLRDAFRMLGF</sequence>
<reference key="1">
    <citation type="journal article" date="1999" name="J. Biol. Chem.">
        <title>Specific expression of activation-induced cytidine deaminase (AID), a novel member of the RNA-editing deaminase family in germinal center B cells.</title>
        <authorList>
            <person name="Muramatsu M."/>
            <person name="Sankaranand V.S."/>
            <person name="Anant S."/>
            <person name="Sugai M."/>
            <person name="Kinoshita K."/>
            <person name="Davidson N.O."/>
            <person name="Honjo T."/>
        </authorList>
    </citation>
    <scope>NUCLEOTIDE SEQUENCE [MRNA]</scope>
</reference>
<reference key="2">
    <citation type="journal article" date="2003" name="Nature">
        <title>Transcription-targeted DNA deamination by the AID antibody diversification enzyme.</title>
        <authorList>
            <person name="Chaudhuri J."/>
            <person name="Tian M."/>
            <person name="Khuong C."/>
            <person name="Chua K."/>
            <person name="Pinaud E."/>
            <person name="Alt F.W."/>
        </authorList>
    </citation>
    <scope>FUNCTION</scope>
    <scope>CATALYTIC ACTIVITY</scope>
    <scope>MUTAGENESIS OF HIS-56 AND GLU-58</scope>
</reference>
<reference key="3">
    <citation type="journal article" date="2010" name="J. Biol. Chem.">
        <title>GANP-mediated recruitment of activation-induced cytidine deaminase to cell nuclei and to immunoglobulin variable region DNA.</title>
        <authorList>
            <person name="Maeda K."/>
            <person name="Singh S.K."/>
            <person name="Eda K."/>
            <person name="Kitabatake M."/>
            <person name="Pham P."/>
            <person name="Goodman M.F."/>
            <person name="Sakaguchi N."/>
        </authorList>
    </citation>
    <scope>INTERACTION WITH MCM3AP</scope>
    <scope>MUTAGENESIS OF ASP-143</scope>
    <scope>SUBCELLULAR LOCATION</scope>
    <scope>TISSUE SPECIFICITY</scope>
</reference>
<reference key="4">
    <citation type="journal article" date="2011" name="Proc. Natl. Acad. Sci. U.S.A.">
        <title>Histone chaperone Spt6 is required for class switch recombination but not somatic hypermutation.</title>
        <authorList>
            <person name="Okazaki I.M."/>
            <person name="Okawa K."/>
            <person name="Kobayashi M."/>
            <person name="Yoshikawa K."/>
            <person name="Kawamoto S."/>
            <person name="Nagaoka H."/>
            <person name="Shinkura R."/>
            <person name="Kitawaki Y."/>
            <person name="Taniguchi H."/>
            <person name="Natsume T."/>
            <person name="Iemura S."/>
            <person name="Honjo T."/>
        </authorList>
    </citation>
    <scope>INTERACTION WITH SUPT6H; TRIM28 AND NCL</scope>
</reference>
<reference key="5">
    <citation type="journal article" date="2013" name="Clin. Immunol.">
        <title>A novel activation-induced cytidine deaminase (AID) mutation in Brazilian patients with hyper-IgM type 2 syndrome.</title>
        <authorList>
            <person name="Caratao N."/>
            <person name="Cortesao C.S."/>
            <person name="Reis P.H."/>
            <person name="Freitas R.F."/>
            <person name="Jacob C.M."/>
            <person name="Pastorino A.C."/>
            <person name="Carneiro-Sampaio M."/>
            <person name="Barreto V.M."/>
        </authorList>
    </citation>
    <scope>FUNCTION</scope>
    <scope>CATALYTIC ACTIVITY</scope>
    <scope>SUBCELLULAR LOCATION</scope>
    <scope>MUTAGENESIS OF PHE-15</scope>
</reference>
<protein>
    <recommendedName>
        <fullName>Single-stranded DNA cytosine deaminase</fullName>
        <ecNumber evidence="5 8">3.5.4.38</ecNumber>
    </recommendedName>
    <alternativeName>
        <fullName>Activation-induced cytidine deaminase</fullName>
        <shortName>AID</shortName>
    </alternativeName>
    <alternativeName>
        <fullName>Cytidine aminohydrolase</fullName>
    </alternativeName>
</protein>
<feature type="chain" id="PRO_0000171688" description="Single-stranded DNA cytosine deaminase">
    <location>
        <begin position="1"/>
        <end position="198"/>
    </location>
</feature>
<feature type="domain" description="CMP/dCMP-type deaminase" evidence="4">
    <location>
        <begin position="23"/>
        <end position="129"/>
    </location>
</feature>
<feature type="region of interest" description="Interaction with SUPT6H" evidence="3">
    <location>
        <begin position="2"/>
        <end position="26"/>
    </location>
</feature>
<feature type="region of interest" description="Important for interaction with CTNNBL1" evidence="3">
    <location>
        <begin position="39"/>
        <end position="42"/>
    </location>
</feature>
<feature type="region of interest" description="Required for interaction with RNF126" evidence="3">
    <location>
        <begin position="88"/>
        <end position="116"/>
    </location>
</feature>
<feature type="short sequence motif" description="Bipartite nuclear localization signal" evidence="3">
    <location>
        <begin position="1"/>
        <end position="30"/>
    </location>
</feature>
<feature type="short sequence motif" description="Nuclear export signal" evidence="3">
    <location>
        <begin position="183"/>
        <end position="198"/>
    </location>
</feature>
<feature type="active site" description="Proton donor" evidence="2">
    <location>
        <position position="58"/>
    </location>
</feature>
<feature type="binding site" evidence="3">
    <location>
        <position position="56"/>
    </location>
    <ligand>
        <name>Zn(2+)</name>
        <dbReference type="ChEBI" id="CHEBI:29105"/>
        <note>catalytic</note>
    </ligand>
</feature>
<feature type="binding site" evidence="3">
    <location>
        <position position="87"/>
    </location>
    <ligand>
        <name>Zn(2+)</name>
        <dbReference type="ChEBI" id="CHEBI:29105"/>
        <note>catalytic</note>
    </ligand>
</feature>
<feature type="binding site" evidence="3">
    <location>
        <position position="90"/>
    </location>
    <ligand>
        <name>Zn(2+)</name>
        <dbReference type="ChEBI" id="CHEBI:29105"/>
        <note>catalytic</note>
    </ligand>
</feature>
<feature type="modified residue" description="Phosphothreonine; by PKA" evidence="3">
    <location>
        <position position="27"/>
    </location>
</feature>
<feature type="modified residue" description="Phosphoserine; by PKA" evidence="3">
    <location>
        <position position="38"/>
    </location>
</feature>
<feature type="mutagenesis site" description="Severely decreased cytidine deaminase activity. Loss of mutagenic activity." evidence="8">
    <original>F</original>
    <variation>L</variation>
    <location>
        <position position="15"/>
    </location>
</feature>
<feature type="mutagenesis site" description="Loss of the cytidine deaminase activity; when associated with Q-58." evidence="5">
    <original>H</original>
    <variation>R</variation>
    <location>
        <position position="56"/>
    </location>
</feature>
<feature type="mutagenesis site" description="Loss of the cytidine deaminase activity; when associated with R-56." evidence="5">
    <original>E</original>
    <variation>Q</variation>
    <location>
        <position position="58"/>
    </location>
</feature>
<feature type="mutagenesis site" description="10-fold decrease in MCM3AP-binding affinity, loss of relocalization to the nucleus in the presence of MCM3AP, decreased deamination activity to about 33% of the wild-type protein." evidence="6">
    <original>D</original>
    <variation>A</variation>
    <location>
        <position position="143"/>
    </location>
</feature>
<comment type="function">
    <text evidence="5 8">Single-stranded DNA-specific cytidine deaminase. Involved in somatic hypermutation (SHM), gene conversion, and class-switch recombination (CSR) in B-lymphocytes by deaminating C to U during transcription of Ig-variable (V) and Ig-switch (S) region DNA. Required for several crucial steps of B-cell terminal differentiation necessary for efficient antibody responses. May also play a role in the epigenetic regulation of gene expression by participating in DNA demethylation.</text>
</comment>
<comment type="catalytic activity">
    <reaction evidence="5 8">
        <text>a 2'-deoxycytidine in single-stranded DNA + H2O + H(+) = a 2'-deoxyuridine in single-stranded DNA + NH4(+)</text>
        <dbReference type="Rhea" id="RHEA:50948"/>
        <dbReference type="Rhea" id="RHEA-COMP:12846"/>
        <dbReference type="Rhea" id="RHEA-COMP:12847"/>
        <dbReference type="ChEBI" id="CHEBI:15377"/>
        <dbReference type="ChEBI" id="CHEBI:15378"/>
        <dbReference type="ChEBI" id="CHEBI:28938"/>
        <dbReference type="ChEBI" id="CHEBI:85452"/>
        <dbReference type="ChEBI" id="CHEBI:133902"/>
        <dbReference type="EC" id="3.5.4.38"/>
    </reaction>
</comment>
<comment type="cofactor">
    <cofactor evidence="3">
        <name>Zn(2+)</name>
        <dbReference type="ChEBI" id="CHEBI:29105"/>
    </cofactor>
</comment>
<comment type="subunit">
    <text evidence="3 6 7">Interacts with CTNNBL1; the interaction is important for the immunoglobulin switch activity of AICDA. Interacts (via its NLS) with KPNA1. Interacts with PKA/PRKACA and PRKAR1A/PKR1 (By similarity). Interacts with SUPT6H, TRIM28 and NCL. Directly interacts with MCM3AP/GANP; this interaction may favor AICDA recruitment to immunoglobulin variable region genes, hence promoting somatic hypermutations (PubMed:20507984).</text>
</comment>
<comment type="interaction">
    <interactant intactId="EBI-3835567">
        <id>Q9WVE0</id>
    </interactant>
    <interactant intactId="EBI-647632">
        <id>Q91Z31</id>
        <label>Ptbp2</label>
    </interactant>
    <organismsDiffer>false</organismsDiffer>
    <experiments>4</experiments>
</comment>
<comment type="interaction">
    <interactant intactId="EBI-3835567">
        <id>Q9WVE0</id>
    </interactant>
    <interactant intactId="EBI-2325586">
        <id>Q64511</id>
        <label>Top2b</label>
    </interactant>
    <organismsDiffer>false</organismsDiffer>
    <experiments>3</experiments>
</comment>
<comment type="interaction">
    <interactant intactId="EBI-3835567">
        <id>Q9WVE0</id>
    </interactant>
    <interactant intactId="EBI-448167">
        <id>P24522</id>
        <label>GADD45A</label>
    </interactant>
    <organismsDiffer>true</organismsDiffer>
    <experiments>3</experiments>
</comment>
<comment type="subcellular location">
    <subcellularLocation>
        <location evidence="6">Nucleus</location>
    </subcellularLocation>
    <subcellularLocation>
        <location evidence="6 8">Cytoplasm</location>
    </subcellularLocation>
    <text evidence="6">Predominantly cytoplasmic. In the presence of MCM3AP/GANP, relocalizes to the nucleus.</text>
</comment>
<comment type="tissue specificity">
    <text evidence="6">Expressed in germinal center B-cells (at protein level).</text>
</comment>
<comment type="PTM">
    <text evidence="1">Ser-38 is the major site whereas Thr-27 is the minor site of phosphorylation. Phosphorylation regulates its class-switch recombination activity (By similarity).</text>
</comment>
<comment type="PTM">
    <text evidence="3">Probably monoubiquitinated on several residues by RNF126.</text>
</comment>
<comment type="similarity">
    <text evidence="9">Belongs to the cytidine and deoxycytidylate deaminase family.</text>
</comment>
<dbReference type="EC" id="3.5.4.38" evidence="5 8"/>
<dbReference type="EMBL" id="AF132979">
    <property type="protein sequence ID" value="AAD41793.1"/>
    <property type="molecule type" value="mRNA"/>
</dbReference>
<dbReference type="CCDS" id="CCDS20497.1"/>
<dbReference type="RefSeq" id="NP_033775.1">
    <property type="nucleotide sequence ID" value="NM_009645.2"/>
</dbReference>
<dbReference type="SMR" id="Q9WVE0"/>
<dbReference type="BioGRID" id="198040">
    <property type="interactions" value="5"/>
</dbReference>
<dbReference type="DIP" id="DIP-48714N"/>
<dbReference type="FunCoup" id="Q9WVE0">
    <property type="interactions" value="686"/>
</dbReference>
<dbReference type="IntAct" id="Q9WVE0">
    <property type="interactions" value="54"/>
</dbReference>
<dbReference type="MINT" id="Q9WVE0"/>
<dbReference type="STRING" id="10090.ENSMUSP00000040524"/>
<dbReference type="iPTMnet" id="Q9WVE0"/>
<dbReference type="PhosphoSitePlus" id="Q9WVE0"/>
<dbReference type="PaxDb" id="10090-ENSMUSP00000040524"/>
<dbReference type="Antibodypedia" id="6178">
    <property type="antibodies" value="429 antibodies from 42 providers"/>
</dbReference>
<dbReference type="DNASU" id="11628"/>
<dbReference type="Ensembl" id="ENSMUST00000043301.14">
    <property type="protein sequence ID" value="ENSMUSP00000040524.8"/>
    <property type="gene ID" value="ENSMUSG00000040627.15"/>
</dbReference>
<dbReference type="GeneID" id="11628"/>
<dbReference type="KEGG" id="mmu:11628"/>
<dbReference type="UCSC" id="uc009dpj.1">
    <property type="organism name" value="mouse"/>
</dbReference>
<dbReference type="AGR" id="MGI:1342279"/>
<dbReference type="CTD" id="57379"/>
<dbReference type="MGI" id="MGI:1342279">
    <property type="gene designation" value="Aicda"/>
</dbReference>
<dbReference type="VEuPathDB" id="HostDB:ENSMUSG00000040627"/>
<dbReference type="eggNOG" id="KOG4075">
    <property type="taxonomic scope" value="Eukaryota"/>
</dbReference>
<dbReference type="GeneTree" id="ENSGT00940000158731"/>
<dbReference type="HOGENOM" id="CLU_080056_4_0_1"/>
<dbReference type="InParanoid" id="Q9WVE0"/>
<dbReference type="OMA" id="CSLLMKQ"/>
<dbReference type="OrthoDB" id="8676111at2759"/>
<dbReference type="PhylomeDB" id="Q9WVE0"/>
<dbReference type="TreeFam" id="TF331356"/>
<dbReference type="BRENDA" id="3.5.4.38">
    <property type="organism ID" value="3474"/>
</dbReference>
<dbReference type="BioGRID-ORCS" id="11628">
    <property type="hits" value="1 hit in 115 CRISPR screens"/>
</dbReference>
<dbReference type="PRO" id="PR:Q9WVE0"/>
<dbReference type="Proteomes" id="UP000000589">
    <property type="component" value="Chromosome 6"/>
</dbReference>
<dbReference type="RNAct" id="Q9WVE0">
    <property type="molecule type" value="protein"/>
</dbReference>
<dbReference type="Bgee" id="ENSMUSG00000040627">
    <property type="expression patterns" value="Expressed in cumulus cell and 39 other cell types or tissues"/>
</dbReference>
<dbReference type="ExpressionAtlas" id="Q9WVE0">
    <property type="expression patterns" value="baseline and differential"/>
</dbReference>
<dbReference type="GO" id="GO:0005737">
    <property type="term" value="C:cytoplasm"/>
    <property type="evidence" value="ECO:0000250"/>
    <property type="project" value="UniProtKB"/>
</dbReference>
<dbReference type="GO" id="GO:0005654">
    <property type="term" value="C:nucleoplasm"/>
    <property type="evidence" value="ECO:0000304"/>
    <property type="project" value="Reactome"/>
</dbReference>
<dbReference type="GO" id="GO:0005634">
    <property type="term" value="C:nucleus"/>
    <property type="evidence" value="ECO:0000250"/>
    <property type="project" value="UniProtKB"/>
</dbReference>
<dbReference type="GO" id="GO:0032991">
    <property type="term" value="C:protein-containing complex"/>
    <property type="evidence" value="ECO:0007669"/>
    <property type="project" value="Ensembl"/>
</dbReference>
<dbReference type="GO" id="GO:0004126">
    <property type="term" value="F:cytidine deaminase activity"/>
    <property type="evidence" value="ECO:0000314"/>
    <property type="project" value="MGI"/>
</dbReference>
<dbReference type="GO" id="GO:0042802">
    <property type="term" value="F:identical protein binding"/>
    <property type="evidence" value="ECO:0007669"/>
    <property type="project" value="Ensembl"/>
</dbReference>
<dbReference type="GO" id="GO:0031625">
    <property type="term" value="F:ubiquitin protein ligase binding"/>
    <property type="evidence" value="ECO:0007669"/>
    <property type="project" value="Ensembl"/>
</dbReference>
<dbReference type="GO" id="GO:0008270">
    <property type="term" value="F:zinc ion binding"/>
    <property type="evidence" value="ECO:0007669"/>
    <property type="project" value="InterPro"/>
</dbReference>
<dbReference type="GO" id="GO:0071222">
    <property type="term" value="P:cellular response to lipopolysaccharide"/>
    <property type="evidence" value="ECO:0000315"/>
    <property type="project" value="MGI"/>
</dbReference>
<dbReference type="GO" id="GO:0009972">
    <property type="term" value="P:cytidine deamination"/>
    <property type="evidence" value="ECO:0000315"/>
    <property type="project" value="UniProtKB"/>
</dbReference>
<dbReference type="GO" id="GO:0042742">
    <property type="term" value="P:defense response to bacterium"/>
    <property type="evidence" value="ECO:0000315"/>
    <property type="project" value="MGI"/>
</dbReference>
<dbReference type="GO" id="GO:0045190">
    <property type="term" value="P:isotype switching"/>
    <property type="evidence" value="ECO:0000315"/>
    <property type="project" value="UniProtKB"/>
</dbReference>
<dbReference type="GO" id="GO:0006397">
    <property type="term" value="P:mRNA processing"/>
    <property type="evidence" value="ECO:0007669"/>
    <property type="project" value="UniProtKB-KW"/>
</dbReference>
<dbReference type="GO" id="GO:0044029">
    <property type="term" value="P:positive regulation of gene expression via chromosomal CpG island demethylation"/>
    <property type="evidence" value="ECO:0000250"/>
    <property type="project" value="UniProtKB"/>
</dbReference>
<dbReference type="GO" id="GO:0033262">
    <property type="term" value="P:regulation of nuclear cell cycle DNA replication"/>
    <property type="evidence" value="ECO:0007669"/>
    <property type="project" value="Ensembl"/>
</dbReference>
<dbReference type="GO" id="GO:0016446">
    <property type="term" value="P:somatic hypermutation of immunoglobulin genes"/>
    <property type="evidence" value="ECO:0000250"/>
    <property type="project" value="UniProtKB"/>
</dbReference>
<dbReference type="CDD" id="cd01283">
    <property type="entry name" value="cytidine_deaminase"/>
    <property type="match status" value="1"/>
</dbReference>
<dbReference type="FunFam" id="3.40.140.10:FF:000022">
    <property type="entry name" value="Single-stranded DNA cytosine deaminase"/>
    <property type="match status" value="1"/>
</dbReference>
<dbReference type="Gene3D" id="3.40.140.10">
    <property type="entry name" value="Cytidine Deaminase, domain 2"/>
    <property type="match status" value="1"/>
</dbReference>
<dbReference type="InterPro" id="IPR016192">
    <property type="entry name" value="APOBEC/CMP_deaminase_Zn-bd"/>
</dbReference>
<dbReference type="InterPro" id="IPR050610">
    <property type="entry name" value="APOBEC_Cyt_Deaminase"/>
</dbReference>
<dbReference type="InterPro" id="IPR013158">
    <property type="entry name" value="APOBEC_N"/>
</dbReference>
<dbReference type="InterPro" id="IPR002125">
    <property type="entry name" value="CMP_dCMP_dom"/>
</dbReference>
<dbReference type="InterPro" id="IPR016193">
    <property type="entry name" value="Cytidine_deaminase-like"/>
</dbReference>
<dbReference type="PANTHER" id="PTHR13857">
    <property type="entry name" value="MRNA EDITING ENZYME"/>
    <property type="match status" value="1"/>
</dbReference>
<dbReference type="PANTHER" id="PTHR13857:SF10">
    <property type="entry name" value="SINGLE-STRANDED DNA CYTOSINE DEAMINASE"/>
    <property type="match status" value="1"/>
</dbReference>
<dbReference type="Pfam" id="PF08210">
    <property type="entry name" value="APOBEC_N"/>
    <property type="match status" value="1"/>
</dbReference>
<dbReference type="SUPFAM" id="SSF53927">
    <property type="entry name" value="Cytidine deaminase-like"/>
    <property type="match status" value="1"/>
</dbReference>
<dbReference type="PROSITE" id="PS00903">
    <property type="entry name" value="CYT_DCMP_DEAMINASES_1"/>
    <property type="match status" value="1"/>
</dbReference>
<dbReference type="PROSITE" id="PS51747">
    <property type="entry name" value="CYT_DCMP_DEAMINASES_2"/>
    <property type="match status" value="1"/>
</dbReference>
<name>AICDA_MOUSE</name>
<gene>
    <name type="primary">Aicda</name>
    <name type="synonym">Aid</name>
</gene>
<accession>Q9WVE0</accession>
<evidence type="ECO:0000250" key="1"/>
<evidence type="ECO:0000250" key="2">
    <source>
        <dbReference type="UniProtKB" id="P0ABF6"/>
    </source>
</evidence>
<evidence type="ECO:0000250" key="3">
    <source>
        <dbReference type="UniProtKB" id="Q9GZX7"/>
    </source>
</evidence>
<evidence type="ECO:0000255" key="4">
    <source>
        <dbReference type="PROSITE-ProRule" id="PRU01083"/>
    </source>
</evidence>
<evidence type="ECO:0000269" key="5">
    <source>
    </source>
</evidence>
<evidence type="ECO:0000269" key="6">
    <source>
    </source>
</evidence>
<evidence type="ECO:0000269" key="7">
    <source>
    </source>
</evidence>
<evidence type="ECO:0000269" key="8">
    <source>
    </source>
</evidence>
<evidence type="ECO:0000305" key="9"/>